<accession>B5VGI4</accession>
<keyword id="KW-0963">Cytoplasm</keyword>
<keyword id="KW-0378">Hydrolase</keyword>
<keyword id="KW-0496">Mitochondrion</keyword>
<keyword id="KW-0547">Nucleotide-binding</keyword>
<keyword id="KW-0539">Nucleus</keyword>
<protein>
    <recommendedName>
        <fullName>Bis(5'-adenosyl)-triphosphatase</fullName>
        <ecNumber>3.6.1.29</ecNumber>
    </recommendedName>
    <alternativeName>
        <fullName>AP3A hydrolase</fullName>
        <shortName>AP3Aase</shortName>
    </alternativeName>
    <alternativeName>
        <fullName>Diadenosine 5',5'''-P1,P3-triphosphate hydrolase</fullName>
    </alternativeName>
    <alternativeName>
        <fullName>Dinucleosidetriphosphatase</fullName>
    </alternativeName>
    <alternativeName>
        <fullName>Hit family protein 2</fullName>
    </alternativeName>
</protein>
<evidence type="ECO:0000250" key="1"/>
<evidence type="ECO:0000255" key="2">
    <source>
        <dbReference type="PROSITE-ProRule" id="PRU00464"/>
    </source>
</evidence>
<evidence type="ECO:0000256" key="3">
    <source>
        <dbReference type="SAM" id="MobiDB-lite"/>
    </source>
</evidence>
<evidence type="ECO:0000305" key="4"/>
<name>HNT2_YEAS6</name>
<gene>
    <name type="primary">HNT2</name>
    <name type="synonym">APH1</name>
    <name type="ORF">AWRI1631_45190</name>
</gene>
<feature type="chain" id="PRO_0000392105" description="Bis(5'-adenosyl)-triphosphatase">
    <location>
        <begin position="1"/>
        <end position="206"/>
    </location>
</feature>
<feature type="domain" description="HIT" evidence="2">
    <location>
        <begin position="3"/>
        <end position="115"/>
    </location>
</feature>
<feature type="region of interest" description="Disordered" evidence="3">
    <location>
        <begin position="143"/>
        <end position="164"/>
    </location>
</feature>
<feature type="short sequence motif" description="Histidine triad motif">
    <location>
        <begin position="96"/>
        <end position="100"/>
    </location>
</feature>
<feature type="active site" description="Tele-AMP-histidine intermediate" evidence="1">
    <location>
        <position position="98"/>
    </location>
</feature>
<sequence length="206" mass="23542">MNKPIYFSKFLVTEQVFYKSKYTYALVNLKPIVPGHVLIVPLRTTVLNLSDLTMPESQDYFKTLQLIHRFIKWQYKADSINVAIQDGPEAGQSVPHLHTHIIPRYKINNVGDLIYDKLDHWDGNGTLTDWQGRRDEYLGVGGRQARKNNSTSATVDGDELSQGPNVLKPDSQRKVRALTEMKKEAEDLQARLEEFVSSDPGLTQWL</sequence>
<comment type="function">
    <text evidence="1">Cleaves A-5'-PPP-5'A to yield AMP and ADP. Can cleave all dinucleoside polyphosphates, provided the phosphate chain contains at least 3 phosphates and that 1 of the 2 bases composing the nucleotide is a purine. Is most effective on dinucleoside triphosphates. Negatively regulates intracellular dinucleoside polyphosphate levels, which elevate following heat shock (By similarity).</text>
</comment>
<comment type="catalytic activity">
    <reaction>
        <text>P(1),P(3)-bis(5'-adenosyl) triphosphate + H2O = AMP + ADP + 2 H(+)</text>
        <dbReference type="Rhea" id="RHEA:13893"/>
        <dbReference type="ChEBI" id="CHEBI:15377"/>
        <dbReference type="ChEBI" id="CHEBI:15378"/>
        <dbReference type="ChEBI" id="CHEBI:58529"/>
        <dbReference type="ChEBI" id="CHEBI:456215"/>
        <dbReference type="ChEBI" id="CHEBI:456216"/>
        <dbReference type="EC" id="3.6.1.29"/>
    </reaction>
</comment>
<comment type="cofactor">
    <cofactor evidence="1">
        <name>Mn(2+)</name>
        <dbReference type="ChEBI" id="CHEBI:29035"/>
    </cofactor>
    <text evidence="1">Divalent metal cations. Mn(2+) is the preferred ion.</text>
</comment>
<comment type="subunit">
    <text evidence="1">Homodimer.</text>
</comment>
<comment type="subcellular location">
    <subcellularLocation>
        <location evidence="1">Cytoplasm</location>
    </subcellularLocation>
    <subcellularLocation>
        <location evidence="1">Nucleus</location>
    </subcellularLocation>
    <subcellularLocation>
        <location evidence="1">Mitochondrion</location>
    </subcellularLocation>
</comment>
<comment type="sequence caution" evidence="4">
    <conflict type="erroneous gene model prediction">
        <sequence resource="EMBL-CDS" id="EDZ72959"/>
    </conflict>
</comment>
<proteinExistence type="inferred from homology"/>
<organism>
    <name type="scientific">Saccharomyces cerevisiae (strain AWRI1631)</name>
    <name type="common">Baker's yeast</name>
    <dbReference type="NCBI Taxonomy" id="545124"/>
    <lineage>
        <taxon>Eukaryota</taxon>
        <taxon>Fungi</taxon>
        <taxon>Dikarya</taxon>
        <taxon>Ascomycota</taxon>
        <taxon>Saccharomycotina</taxon>
        <taxon>Saccharomycetes</taxon>
        <taxon>Saccharomycetales</taxon>
        <taxon>Saccharomycetaceae</taxon>
        <taxon>Saccharomyces</taxon>
    </lineage>
</organism>
<dbReference type="EC" id="3.6.1.29"/>
<dbReference type="EMBL" id="ABSV01000513">
    <property type="protein sequence ID" value="EDZ72959.1"/>
    <property type="status" value="ALT_SEQ"/>
    <property type="molecule type" value="Genomic_DNA"/>
</dbReference>
<dbReference type="SMR" id="B5VGI4"/>
<dbReference type="OrthoDB" id="13869at4893"/>
<dbReference type="Proteomes" id="UP000008988">
    <property type="component" value="Unassembled WGS sequence"/>
</dbReference>
<dbReference type="GO" id="GO:0005739">
    <property type="term" value="C:mitochondrion"/>
    <property type="evidence" value="ECO:0007669"/>
    <property type="project" value="UniProtKB-SubCell"/>
</dbReference>
<dbReference type="GO" id="GO:0005634">
    <property type="term" value="C:nucleus"/>
    <property type="evidence" value="ECO:0007669"/>
    <property type="project" value="UniProtKB-SubCell"/>
</dbReference>
<dbReference type="GO" id="GO:0047710">
    <property type="term" value="F:bis(5'-adenosyl)-triphosphatase activity"/>
    <property type="evidence" value="ECO:0007669"/>
    <property type="project" value="UniProtKB-EC"/>
</dbReference>
<dbReference type="GO" id="GO:0000166">
    <property type="term" value="F:nucleotide binding"/>
    <property type="evidence" value="ECO:0007669"/>
    <property type="project" value="UniProtKB-KW"/>
</dbReference>
<dbReference type="CDD" id="cd01275">
    <property type="entry name" value="FHIT"/>
    <property type="match status" value="1"/>
</dbReference>
<dbReference type="Gene3D" id="3.30.428.10">
    <property type="entry name" value="HIT-like"/>
    <property type="match status" value="1"/>
</dbReference>
<dbReference type="InterPro" id="IPR051884">
    <property type="entry name" value="Bis(5'-adenosyl)-TPase_reg"/>
</dbReference>
<dbReference type="InterPro" id="IPR039383">
    <property type="entry name" value="FHIT"/>
</dbReference>
<dbReference type="InterPro" id="IPR019808">
    <property type="entry name" value="Histidine_triad_CS"/>
</dbReference>
<dbReference type="InterPro" id="IPR011146">
    <property type="entry name" value="HIT-like"/>
</dbReference>
<dbReference type="InterPro" id="IPR036265">
    <property type="entry name" value="HIT-like_sf"/>
</dbReference>
<dbReference type="PANTHER" id="PTHR46243">
    <property type="entry name" value="BIS(5'-ADENOSYL)-TRIPHOSPHATASE"/>
    <property type="match status" value="1"/>
</dbReference>
<dbReference type="PANTHER" id="PTHR46243:SF1">
    <property type="entry name" value="BIS(5'-ADENOSYL)-TRIPHOSPHATASE"/>
    <property type="match status" value="1"/>
</dbReference>
<dbReference type="Pfam" id="PF01230">
    <property type="entry name" value="HIT"/>
    <property type="match status" value="1"/>
</dbReference>
<dbReference type="SUPFAM" id="SSF54197">
    <property type="entry name" value="HIT-like"/>
    <property type="match status" value="1"/>
</dbReference>
<dbReference type="PROSITE" id="PS00892">
    <property type="entry name" value="HIT_1"/>
    <property type="match status" value="1"/>
</dbReference>
<dbReference type="PROSITE" id="PS51084">
    <property type="entry name" value="HIT_2"/>
    <property type="match status" value="1"/>
</dbReference>
<reference key="1">
    <citation type="journal article" date="2008" name="FEMS Yeast Res.">
        <title>Comparative genome analysis of a Saccharomyces cerevisiae wine strain.</title>
        <authorList>
            <person name="Borneman A.R."/>
            <person name="Forgan A.H."/>
            <person name="Pretorius I.S."/>
            <person name="Chambers P.J."/>
        </authorList>
    </citation>
    <scope>NUCLEOTIDE SEQUENCE [LARGE SCALE GENOMIC DNA]</scope>
    <source>
        <strain>AWRI1631</strain>
    </source>
</reference>